<comment type="subcellular location">
    <subcellularLocation>
        <location evidence="1">Secreted</location>
    </subcellularLocation>
</comment>
<comment type="similarity">
    <text evidence="3">Belongs to the DEFL family.</text>
</comment>
<comment type="caution">
    <text evidence="3">Lacks 1 of the 4 disulfide bonds, which are conserved features of the family.</text>
</comment>
<protein>
    <recommendedName>
        <fullName>Putative defensin-like protein 265</fullName>
    </recommendedName>
</protein>
<organism>
    <name type="scientific">Arabidopsis thaliana</name>
    <name type="common">Mouse-ear cress</name>
    <dbReference type="NCBI Taxonomy" id="3702"/>
    <lineage>
        <taxon>Eukaryota</taxon>
        <taxon>Viridiplantae</taxon>
        <taxon>Streptophyta</taxon>
        <taxon>Embryophyta</taxon>
        <taxon>Tracheophyta</taxon>
        <taxon>Spermatophyta</taxon>
        <taxon>Magnoliopsida</taxon>
        <taxon>eudicotyledons</taxon>
        <taxon>Gunneridae</taxon>
        <taxon>Pentapetalae</taxon>
        <taxon>rosids</taxon>
        <taxon>malvids</taxon>
        <taxon>Brassicales</taxon>
        <taxon>Brassicaceae</taxon>
        <taxon>Camelineae</taxon>
        <taxon>Arabidopsis</taxon>
    </lineage>
</organism>
<sequence length="81" mass="8727">MEKTVSRKVVVLAILLSLSCLCIAKASKGEEKTSGELRDVTPQRGGPCSYDNLCHNHCPGCKITQCVNGECVCLICYTPPL</sequence>
<proteinExistence type="inferred from homology"/>
<feature type="signal peptide" evidence="2">
    <location>
        <begin position="1"/>
        <end position="26"/>
    </location>
</feature>
<feature type="chain" id="PRO_0000379727" description="Putative defensin-like protein 265">
    <location>
        <begin position="27"/>
        <end position="81"/>
    </location>
</feature>
<feature type="disulfide bond" evidence="1">
    <location>
        <begin position="48"/>
        <end position="66"/>
    </location>
</feature>
<feature type="disulfide bond" evidence="1">
    <location>
        <begin position="54"/>
        <end position="71"/>
    </location>
</feature>
<feature type="disulfide bond" evidence="1">
    <location>
        <begin position="58"/>
        <end position="73"/>
    </location>
</feature>
<name>DF265_ARATH</name>
<dbReference type="EMBL" id="AB020751">
    <property type="status" value="NOT_ANNOTATED_CDS"/>
    <property type="molecule type" value="Genomic_DNA"/>
</dbReference>
<dbReference type="EMBL" id="CP002688">
    <property type="protein sequence ID" value="AED97634.1"/>
    <property type="molecule type" value="Genomic_DNA"/>
</dbReference>
<dbReference type="RefSeq" id="NP_001032125.1">
    <property type="nucleotide sequence ID" value="NM_001037048.2"/>
</dbReference>
<dbReference type="SMR" id="Q2V2W2"/>
<dbReference type="STRING" id="3702.Q2V2W2"/>
<dbReference type="PaxDb" id="3702-AT5G62627.1"/>
<dbReference type="EnsemblPlants" id="AT5G62627.1">
    <property type="protein sequence ID" value="AT5G62627.1"/>
    <property type="gene ID" value="AT5G62627"/>
</dbReference>
<dbReference type="GeneID" id="3771551"/>
<dbReference type="Gramene" id="AT5G62627.1">
    <property type="protein sequence ID" value="AT5G62627.1"/>
    <property type="gene ID" value="AT5G62627"/>
</dbReference>
<dbReference type="KEGG" id="ath:AT5G62627"/>
<dbReference type="Araport" id="AT5G62627"/>
<dbReference type="TAIR" id="AT5G62627"/>
<dbReference type="HOGENOM" id="CLU_2472158_0_0_1"/>
<dbReference type="InParanoid" id="Q2V2W2"/>
<dbReference type="OMA" id="CAITHCI"/>
<dbReference type="OrthoDB" id="10299572at2759"/>
<dbReference type="PhylomeDB" id="Q2V2W2"/>
<dbReference type="PRO" id="PR:Q2V2W2"/>
<dbReference type="Proteomes" id="UP000006548">
    <property type="component" value="Chromosome 5"/>
</dbReference>
<dbReference type="ExpressionAtlas" id="Q2V2W2">
    <property type="expression patterns" value="baseline"/>
</dbReference>
<dbReference type="GO" id="GO:0005576">
    <property type="term" value="C:extracellular region"/>
    <property type="evidence" value="ECO:0007669"/>
    <property type="project" value="UniProtKB-SubCell"/>
</dbReference>
<dbReference type="GO" id="GO:0050832">
    <property type="term" value="P:defense response to fungus"/>
    <property type="evidence" value="ECO:0007669"/>
    <property type="project" value="UniProtKB-KW"/>
</dbReference>
<dbReference type="GO" id="GO:0031640">
    <property type="term" value="P:killing of cells of another organism"/>
    <property type="evidence" value="ECO:0007669"/>
    <property type="project" value="UniProtKB-KW"/>
</dbReference>
<gene>
    <name type="ordered locus">At5g62627</name>
    <name type="ORF">MRG21</name>
</gene>
<evidence type="ECO:0000250" key="1"/>
<evidence type="ECO:0000255" key="2"/>
<evidence type="ECO:0000305" key="3"/>
<reference key="1">
    <citation type="journal article" date="2000" name="DNA Res.">
        <title>Structural analysis of Arabidopsis thaliana chromosome 5. X. Sequence features of the regions of 3,076,755 bp covered by sixty P1 and TAC clones.</title>
        <authorList>
            <person name="Sato S."/>
            <person name="Nakamura Y."/>
            <person name="Kaneko T."/>
            <person name="Katoh T."/>
            <person name="Asamizu E."/>
            <person name="Kotani H."/>
            <person name="Tabata S."/>
        </authorList>
    </citation>
    <scope>NUCLEOTIDE SEQUENCE [LARGE SCALE GENOMIC DNA]</scope>
    <source>
        <strain>cv. Columbia</strain>
    </source>
</reference>
<reference key="2">
    <citation type="journal article" date="2017" name="Plant J.">
        <title>Araport11: a complete reannotation of the Arabidopsis thaliana reference genome.</title>
        <authorList>
            <person name="Cheng C.Y."/>
            <person name="Krishnakumar V."/>
            <person name="Chan A.P."/>
            <person name="Thibaud-Nissen F."/>
            <person name="Schobel S."/>
            <person name="Town C.D."/>
        </authorList>
    </citation>
    <scope>GENOME REANNOTATION</scope>
    <source>
        <strain>cv. Columbia</strain>
    </source>
</reference>
<reference key="3">
    <citation type="journal article" date="2005" name="Plant Physiol.">
        <title>Genome organization of more than 300 defensin-like genes in Arabidopsis.</title>
        <authorList>
            <person name="Silverstein K.A.T."/>
            <person name="Graham M.A."/>
            <person name="Paape T.D."/>
            <person name="VandenBosch K.A."/>
        </authorList>
    </citation>
    <scope>GENE FAMILY</scope>
</reference>
<keyword id="KW-0929">Antimicrobial</keyword>
<keyword id="KW-1015">Disulfide bond</keyword>
<keyword id="KW-0295">Fungicide</keyword>
<keyword id="KW-0611">Plant defense</keyword>
<keyword id="KW-1185">Reference proteome</keyword>
<keyword id="KW-0964">Secreted</keyword>
<keyword id="KW-0732">Signal</keyword>
<accession>Q2V2W2</accession>